<keyword id="KW-0030">Aminoacyl-tRNA synthetase</keyword>
<keyword id="KW-0067">ATP-binding</keyword>
<keyword id="KW-0963">Cytoplasm</keyword>
<keyword id="KW-0436">Ligase</keyword>
<keyword id="KW-0547">Nucleotide-binding</keyword>
<keyword id="KW-0648">Protein biosynthesis</keyword>
<keyword id="KW-1185">Reference proteome</keyword>
<reference key="1">
    <citation type="journal article" date="2000" name="Nature">
        <title>The genome sequence of the thermoacidophilic scavenger Thermoplasma acidophilum.</title>
        <authorList>
            <person name="Ruepp A."/>
            <person name="Graml W."/>
            <person name="Santos-Martinez M.-L."/>
            <person name="Koretke K.K."/>
            <person name="Volker C."/>
            <person name="Mewes H.-W."/>
            <person name="Frishman D."/>
            <person name="Stocker S."/>
            <person name="Lupas A.N."/>
            <person name="Baumeister W."/>
        </authorList>
    </citation>
    <scope>NUCLEOTIDE SEQUENCE [LARGE SCALE GENOMIC DNA]</scope>
    <source>
        <strain>ATCC 25905 / DSM 1728 / JCM 9062 / NBRC 15155 / AMRC-C165</strain>
    </source>
</reference>
<name>SYY_THEAC</name>
<protein>
    <recommendedName>
        <fullName evidence="1">Tyrosine--tRNA ligase</fullName>
        <ecNumber evidence="1">6.1.1.1</ecNumber>
    </recommendedName>
    <alternativeName>
        <fullName evidence="1">Tyrosyl-tRNA synthetase</fullName>
        <shortName evidence="1">TyrRS</shortName>
    </alternativeName>
</protein>
<evidence type="ECO:0000255" key="1">
    <source>
        <dbReference type="HAMAP-Rule" id="MF_02009"/>
    </source>
</evidence>
<organism>
    <name type="scientific">Thermoplasma acidophilum (strain ATCC 25905 / DSM 1728 / JCM 9062 / NBRC 15155 / AMRC-C165)</name>
    <dbReference type="NCBI Taxonomy" id="273075"/>
    <lineage>
        <taxon>Archaea</taxon>
        <taxon>Methanobacteriati</taxon>
        <taxon>Thermoplasmatota</taxon>
        <taxon>Thermoplasmata</taxon>
        <taxon>Thermoplasmatales</taxon>
        <taxon>Thermoplasmataceae</taxon>
        <taxon>Thermoplasma</taxon>
    </lineage>
</organism>
<feature type="chain" id="PRO_0000240273" description="Tyrosine--tRNA ligase">
    <location>
        <begin position="1"/>
        <end position="332"/>
    </location>
</feature>
<feature type="short sequence motif" description="'KMSKS' region">
    <location>
        <begin position="219"/>
        <end position="223"/>
    </location>
</feature>
<feature type="binding site" evidence="1">
    <location>
        <position position="32"/>
    </location>
    <ligand>
        <name>L-tyrosine</name>
        <dbReference type="ChEBI" id="CHEBI:58315"/>
    </ligand>
</feature>
<feature type="binding site" evidence="1">
    <location>
        <position position="156"/>
    </location>
    <ligand>
        <name>L-tyrosine</name>
        <dbReference type="ChEBI" id="CHEBI:58315"/>
    </ligand>
</feature>
<feature type="binding site" evidence="1">
    <location>
        <position position="160"/>
    </location>
    <ligand>
        <name>L-tyrosine</name>
        <dbReference type="ChEBI" id="CHEBI:58315"/>
    </ligand>
</feature>
<feature type="binding site" evidence="1">
    <location>
        <position position="163"/>
    </location>
    <ligand>
        <name>L-tyrosine</name>
        <dbReference type="ChEBI" id="CHEBI:58315"/>
    </ligand>
</feature>
<feature type="binding site" evidence="1">
    <location>
        <position position="178"/>
    </location>
    <ligand>
        <name>L-tyrosine</name>
        <dbReference type="ChEBI" id="CHEBI:58315"/>
    </ligand>
</feature>
<feature type="binding site" evidence="1">
    <location>
        <position position="222"/>
    </location>
    <ligand>
        <name>ATP</name>
        <dbReference type="ChEBI" id="CHEBI:30616"/>
    </ligand>
</feature>
<accession>Q9HKT3</accession>
<gene>
    <name evidence="1" type="primary">tyrS</name>
    <name type="ordered locus">Ta0512</name>
</gene>
<comment type="function">
    <text evidence="1">Catalyzes the attachment of tyrosine to tRNA(Tyr) in a two-step reaction: tyrosine is first activated by ATP to form Tyr-AMP and then transferred to the acceptor end of tRNA(Tyr).</text>
</comment>
<comment type="catalytic activity">
    <reaction evidence="1">
        <text>tRNA(Tyr) + L-tyrosine + ATP = L-tyrosyl-tRNA(Tyr) + AMP + diphosphate + H(+)</text>
        <dbReference type="Rhea" id="RHEA:10220"/>
        <dbReference type="Rhea" id="RHEA-COMP:9706"/>
        <dbReference type="Rhea" id="RHEA-COMP:9707"/>
        <dbReference type="ChEBI" id="CHEBI:15378"/>
        <dbReference type="ChEBI" id="CHEBI:30616"/>
        <dbReference type="ChEBI" id="CHEBI:33019"/>
        <dbReference type="ChEBI" id="CHEBI:58315"/>
        <dbReference type="ChEBI" id="CHEBI:78442"/>
        <dbReference type="ChEBI" id="CHEBI:78536"/>
        <dbReference type="ChEBI" id="CHEBI:456215"/>
        <dbReference type="EC" id="6.1.1.1"/>
    </reaction>
</comment>
<comment type="subunit">
    <text evidence="1">Homodimer.</text>
</comment>
<comment type="subcellular location">
    <subcellularLocation>
        <location evidence="1">Cytoplasm</location>
    </subcellularLocation>
</comment>
<comment type="similarity">
    <text evidence="1">Belongs to the class-I aminoacyl-tRNA synthetase family. TyrS type 4 subfamily.</text>
</comment>
<proteinExistence type="inferred from homology"/>
<dbReference type="EC" id="6.1.1.1" evidence="1"/>
<dbReference type="EMBL" id="AL445064">
    <property type="protein sequence ID" value="CAC11652.1"/>
    <property type="molecule type" value="Genomic_DNA"/>
</dbReference>
<dbReference type="RefSeq" id="WP_010900937.1">
    <property type="nucleotide sequence ID" value="NC_002578.1"/>
</dbReference>
<dbReference type="SMR" id="Q9HKT3"/>
<dbReference type="FunCoup" id="Q9HKT3">
    <property type="interactions" value="193"/>
</dbReference>
<dbReference type="STRING" id="273075.gene:9571730"/>
<dbReference type="PaxDb" id="273075-Ta0512"/>
<dbReference type="EnsemblBacteria" id="CAC11652">
    <property type="protein sequence ID" value="CAC11652"/>
    <property type="gene ID" value="CAC11652"/>
</dbReference>
<dbReference type="KEGG" id="tac:Ta0512"/>
<dbReference type="eggNOG" id="arCOG01886">
    <property type="taxonomic scope" value="Archaea"/>
</dbReference>
<dbReference type="HOGENOM" id="CLU_035267_1_1_2"/>
<dbReference type="InParanoid" id="Q9HKT3"/>
<dbReference type="OrthoDB" id="8389at2157"/>
<dbReference type="Proteomes" id="UP000001024">
    <property type="component" value="Chromosome"/>
</dbReference>
<dbReference type="GO" id="GO:0005737">
    <property type="term" value="C:cytoplasm"/>
    <property type="evidence" value="ECO:0007669"/>
    <property type="project" value="UniProtKB-SubCell"/>
</dbReference>
<dbReference type="GO" id="GO:0005524">
    <property type="term" value="F:ATP binding"/>
    <property type="evidence" value="ECO:0007669"/>
    <property type="project" value="UniProtKB-UniRule"/>
</dbReference>
<dbReference type="GO" id="GO:0004831">
    <property type="term" value="F:tyrosine-tRNA ligase activity"/>
    <property type="evidence" value="ECO:0007669"/>
    <property type="project" value="UniProtKB-UniRule"/>
</dbReference>
<dbReference type="GO" id="GO:0006437">
    <property type="term" value="P:tyrosyl-tRNA aminoacylation"/>
    <property type="evidence" value="ECO:0007669"/>
    <property type="project" value="UniProtKB-UniRule"/>
</dbReference>
<dbReference type="CDD" id="cd00805">
    <property type="entry name" value="TyrRS_core"/>
    <property type="match status" value="1"/>
</dbReference>
<dbReference type="Gene3D" id="3.40.50.620">
    <property type="entry name" value="HUPs"/>
    <property type="match status" value="1"/>
</dbReference>
<dbReference type="Gene3D" id="1.10.240.10">
    <property type="entry name" value="Tyrosyl-Transfer RNA Synthetase"/>
    <property type="match status" value="1"/>
</dbReference>
<dbReference type="HAMAP" id="MF_02009">
    <property type="entry name" value="Tyr_tRNA_synth_type4"/>
    <property type="match status" value="1"/>
</dbReference>
<dbReference type="InterPro" id="IPR002305">
    <property type="entry name" value="aa-tRNA-synth_Ic"/>
</dbReference>
<dbReference type="InterPro" id="IPR014729">
    <property type="entry name" value="Rossmann-like_a/b/a_fold"/>
</dbReference>
<dbReference type="InterPro" id="IPR002307">
    <property type="entry name" value="Tyr-tRNA-ligase"/>
</dbReference>
<dbReference type="InterPro" id="IPR023678">
    <property type="entry name" value="Tyr-tRNA-ligase_4"/>
</dbReference>
<dbReference type="InterPro" id="IPR023617">
    <property type="entry name" value="Tyr-tRNA-ligase_arc/euk-type"/>
</dbReference>
<dbReference type="InterPro" id="IPR050489">
    <property type="entry name" value="Tyr-tRNA_synthase"/>
</dbReference>
<dbReference type="NCBIfam" id="NF006330">
    <property type="entry name" value="PRK08560.1"/>
    <property type="match status" value="1"/>
</dbReference>
<dbReference type="PANTHER" id="PTHR46264:SF4">
    <property type="entry name" value="TYROSINE--TRNA LIGASE, CYTOPLASMIC"/>
    <property type="match status" value="1"/>
</dbReference>
<dbReference type="PANTHER" id="PTHR46264">
    <property type="entry name" value="TYROSINE-TRNA LIGASE"/>
    <property type="match status" value="1"/>
</dbReference>
<dbReference type="Pfam" id="PF00579">
    <property type="entry name" value="tRNA-synt_1b"/>
    <property type="match status" value="1"/>
</dbReference>
<dbReference type="PIRSF" id="PIRSF006588">
    <property type="entry name" value="TyrRS_arch_euk"/>
    <property type="match status" value="1"/>
</dbReference>
<dbReference type="SUPFAM" id="SSF52374">
    <property type="entry name" value="Nucleotidylyl transferase"/>
    <property type="match status" value="1"/>
</dbReference>
<sequence>MHLIEKIYKNTREVVTREDAERLEGKSDIKSYIGIEPSGIPHIATAVMWPRKLAEIQDDIKVTVLLADWHAMINNKLHGDLDLIRKGGEILRKTFQAEGLTKADYVWASDLVDSSEYWRMFIDTAKRSTLKRVIRSLPIMGRNETDAEKDFSMYLYPIMQVTDIFYLDVDMAFGGMDQRHAHMLARDIAEKMKRKKVVSVHGFLLSSLKGNARMDNFVKMSKSDPNSAILVTDHMEDIERKINAAYCPPQQVEGNPVAEIMKYIIIPYYGKSIEIHGSNGVINLDSVENFDQAYQRGEIQPADLKHKVATILNEMVEPARRSLEGLDLSEFQ</sequence>